<name>GSL_ARATH</name>
<sequence>MAENYDRASELKAFDEMKIGVKGLVDAGVTKVPRIFHNPHVNVANPKPTSTVVMIPTIDLGGVFESTVVRESVVAKVKDAMEKFGFFQAINHGVPLDVMEKMINGIRRFHDQDPEVRKMFYTRDKTKKLKYHSNADLYESPAASWRDTLSCVMAPDVPKAQDLPEVCGEIMLEYSKEVMKLAELMFEILSEALGLSPNHLKEMDCAKGLWMLCHCFPPCPEPNRTFGGAQHTDRSFLTILLNDNNGGLQVLYDGYWIDVPPNPEALIFNVGDFLQLISNDKFVSMEHRILANGGEEPRISVACFFVHTFTSPSSRVYGPIKELLSELNPPKYRDTTSESSNHYVARKPNGNSSLDHLRI</sequence>
<organism>
    <name type="scientific">Arabidopsis thaliana</name>
    <name type="common">Mouse-ear cress</name>
    <dbReference type="NCBI Taxonomy" id="3702"/>
    <lineage>
        <taxon>Eukaryota</taxon>
        <taxon>Viridiplantae</taxon>
        <taxon>Streptophyta</taxon>
        <taxon>Embryophyta</taxon>
        <taxon>Tracheophyta</taxon>
        <taxon>Spermatophyta</taxon>
        <taxon>Magnoliopsida</taxon>
        <taxon>eudicotyledons</taxon>
        <taxon>Gunneridae</taxon>
        <taxon>Pentapetalae</taxon>
        <taxon>rosids</taxon>
        <taxon>malvids</taxon>
        <taxon>Brassicales</taxon>
        <taxon>Brassicaceae</taxon>
        <taxon>Camelineae</taxon>
        <taxon>Arabidopsis</taxon>
    </lineage>
</organism>
<feature type="chain" id="PRO_0000357026" description="Probable 2-oxoacid dependent dioxygenase">
    <location>
        <begin position="1"/>
        <end position="359"/>
    </location>
</feature>
<feature type="domain" description="Fe2OG dioxygenase" evidence="1">
    <location>
        <begin position="207"/>
        <end position="308"/>
    </location>
</feature>
<feature type="region of interest" description="Disordered" evidence="2">
    <location>
        <begin position="329"/>
        <end position="359"/>
    </location>
</feature>
<feature type="compositionally biased region" description="Polar residues" evidence="2">
    <location>
        <begin position="349"/>
        <end position="359"/>
    </location>
</feature>
<feature type="binding site" evidence="1">
    <location>
        <position position="231"/>
    </location>
    <ligand>
        <name>Fe cation</name>
        <dbReference type="ChEBI" id="CHEBI:24875"/>
    </ligand>
</feature>
<feature type="binding site" evidence="1">
    <location>
        <position position="233"/>
    </location>
    <ligand>
        <name>Fe cation</name>
        <dbReference type="ChEBI" id="CHEBI:24875"/>
    </ligand>
</feature>
<feature type="binding site" evidence="1">
    <location>
        <position position="287"/>
    </location>
    <ligand>
        <name>Fe cation</name>
        <dbReference type="ChEBI" id="CHEBI:24875"/>
    </ligand>
</feature>
<feature type="sequence variant" description="In strain: cv. Cvi-0.">
    <original>G</original>
    <variation>S</variation>
    <location>
        <position position="105"/>
    </location>
</feature>
<feature type="sequence variant" description="In strain: cv. Cvi-0.">
    <original>L</original>
    <variation>F</variation>
    <location>
        <position position="184"/>
    </location>
</feature>
<feature type="sequence variant" description="In strain: cv. Cvi-0.">
    <original>P</original>
    <variation>H</variation>
    <location>
        <position position="218"/>
    </location>
</feature>
<feature type="sequence variant" description="In strain: cv. Cvi-0.">
    <original>G</original>
    <variation>E</variation>
    <location>
        <position position="254"/>
    </location>
</feature>
<feature type="sequence variant" description="In strain: cv. Cvi-0.">
    <original>R</original>
    <variation>I</variation>
    <location>
        <position position="288"/>
    </location>
</feature>
<accession>Q9SKK4</accession>
<accession>Q56WB2</accession>
<protein>
    <recommendedName>
        <fullName evidence="5">Probable 2-oxoacid dependent dioxygenase</fullName>
        <ecNumber evidence="3">1.14.-.-</ecNumber>
    </recommendedName>
</protein>
<comment type="function">
    <text evidence="3">Necessary for the hydroxylation of but-3-enyl glucosinolate to 2-hydroxybut-3-enyl glucosinolate, which is toxic to insects, bacteria and nematodes, inhibits seed germination and produces bitter flavors.</text>
</comment>
<comment type="catalytic activity">
    <reaction evidence="3">
        <text>gluconapin + AH2 + O2 = progoitrin + A + H2O</text>
        <dbReference type="Rhea" id="RHEA:60628"/>
        <dbReference type="ChEBI" id="CHEBI:5411"/>
        <dbReference type="ChEBI" id="CHEBI:13193"/>
        <dbReference type="ChEBI" id="CHEBI:15377"/>
        <dbReference type="ChEBI" id="CHEBI:15379"/>
        <dbReference type="ChEBI" id="CHEBI:17499"/>
        <dbReference type="ChEBI" id="CHEBI:183096"/>
    </reaction>
    <physiologicalReaction direction="left-to-right" evidence="3">
        <dbReference type="Rhea" id="RHEA:60629"/>
    </physiologicalReaction>
</comment>
<comment type="cofactor">
    <cofactor evidence="1">
        <name>Fe(2+)</name>
        <dbReference type="ChEBI" id="CHEBI:29033"/>
    </cofactor>
    <text evidence="1">Binds 1 Fe(2+) ion per subunit.</text>
</comment>
<comment type="tissue specificity">
    <text evidence="3">Expressed in leaves and seeds. All cultivars with seed-only-functional allele have low to non-detectable GSL-OH expression in the leaves.</text>
</comment>
<comment type="polymorphism">
    <text evidence="3">Cv. Adb-0, cv. Ag-0, cv. Ang-0, cv. Bla-10, cv. Bs-1, cv. Bur-0, cv. Cal-0, cv. Cnt-1, cv. Columbia, cv. Di-1, cv. Edi-0, cv. Ei-2, cv. Ema-1, cv. Et-0, cv. Ge-0, cv. Lc-0, cv. Lo-2, cv. Mir-0, cv. Mrk-0, cv. Mt-0, cv. Pog-0, cv. Rd-0, cv. Rou-0, cv. Sf-1, cv. Tac-0, cv. Wei-0 and cv. Yo-0 contain a leaf- and seed-functional allele. Cv. Di-0, cv. Kas-1, cv. Lip-0, cv. Landsberg erecta, cv. Sha, cv. Sorbo, cv. Tsu-1 and cv. Wassilewskija contain a seed-only-functional allele. Cv. Cvi-0, cv. Hodja-Obi-Garm and cv. Kon contain a null allele. The null allele in cv. Cvi-0 is produced by 5 amino acid substitutions while the one in cv. Kon or cv. Hodja-Obi-Garm is produced by a substitution generating a stop codon at position 132.</text>
</comment>
<comment type="disruption phenotype">
    <text evidence="3">Plants exhibit a complete absence of 2-hydroxybut-3-enyl glucosinolate accumulation and a decreased resistance to generalist herbivory.</text>
</comment>
<comment type="similarity">
    <text evidence="5">Belongs to the iron/ascorbate-dependent oxidoreductase family.</text>
</comment>
<comment type="sequence caution" evidence="5">
    <conflict type="erroneous initiation">
        <sequence resource="EMBL-CDS" id="BAD95147"/>
    </conflict>
    <text>Truncated N-terminus.</text>
</comment>
<gene>
    <name evidence="4" type="primary">GSL-OH</name>
    <name evidence="6" type="ordered locus">At2g25450</name>
    <name evidence="7" type="ORF">F13B15.11</name>
</gene>
<proteinExistence type="evidence at protein level"/>
<evidence type="ECO:0000255" key="1">
    <source>
        <dbReference type="PROSITE-ProRule" id="PRU00805"/>
    </source>
</evidence>
<evidence type="ECO:0000256" key="2">
    <source>
        <dbReference type="SAM" id="MobiDB-lite"/>
    </source>
</evidence>
<evidence type="ECO:0000269" key="3">
    <source>
    </source>
</evidence>
<evidence type="ECO:0000303" key="4">
    <source>
    </source>
</evidence>
<evidence type="ECO:0000305" key="5"/>
<evidence type="ECO:0000312" key="6">
    <source>
        <dbReference type="Araport" id="AT2G25450"/>
    </source>
</evidence>
<evidence type="ECO:0000312" key="7">
    <source>
        <dbReference type="EMBL" id="AAD20704.1"/>
    </source>
</evidence>
<reference key="1">
    <citation type="journal article" date="2008" name="Plant Physiol.">
        <title>A novel 2-oxoacid-dependent dioxygenase involved in the formation of the goiterogenic 2-hydroxybut-3-enyl glucosinolate and generalist insect resistance in Arabidopsis.</title>
        <authorList>
            <person name="Hansen B.G."/>
            <person name="Kerwin R.E."/>
            <person name="Ober J.A."/>
            <person name="Lambrix V.M."/>
            <person name="Mitchell-Olds T."/>
            <person name="Gershenzon J."/>
            <person name="Halkier B.A."/>
            <person name="Kliebenstein D.J."/>
        </authorList>
    </citation>
    <scope>NUCLEOTIDE SEQUENCE [GENOMIC DNA]</scope>
    <scope>FUNCTION</scope>
    <scope>CATALYTIC ACTIVITY</scope>
    <scope>DISRUPTION PHENOTYPE</scope>
    <scope>POLYMORPHISM</scope>
    <scope>TISSUE SPECIFICITY</scope>
    <source>
        <strain>cv. Abd-0</strain>
        <strain>cv. Ag-0</strain>
        <strain>cv. Ang-0</strain>
        <strain>cv. Bla-10</strain>
        <strain>cv. Bs-1</strain>
        <strain>cv. Bur-0</strain>
        <strain>cv. Cal-0</strain>
        <strain>cv. Cnt-1</strain>
        <strain>cv. Columbia</strain>
        <strain>cv. Cvi-0</strain>
        <strain>cv. Di-0</strain>
        <strain>cv. Di-1</strain>
        <strain>cv. Edi-0</strain>
        <strain>cv. Ei-2</strain>
        <strain>cv. Ema-1</strain>
        <strain>cv. Et-0</strain>
        <strain>cv. Ge-0</strain>
        <strain>cv. HOG</strain>
        <strain>cv. Kas-1</strain>
        <strain>cv. Kon</strain>
        <strain>cv. Landsberg erecta</strain>
        <strain>cv. Lc-0</strain>
        <strain>cv. Lip-0</strain>
        <strain>cv. Lo-2</strain>
        <strain>cv. Mir-0</strain>
        <strain>cv. Mrk-0</strain>
        <strain>cv. Mt-0</strain>
        <strain>cv. Pog-0</strain>
        <strain>cv. Rd-0</strain>
        <strain>cv. Rou-0</strain>
        <strain>cv. Sf-1</strain>
        <strain>cv. Sha</strain>
        <strain>cv. Sorbo</strain>
        <strain>cv. Tac-0</strain>
        <strain>cv. Tsu-1</strain>
        <strain>cv. Wassilewskija</strain>
        <strain>cv. Wei-0</strain>
        <strain>cv. Yo-0</strain>
    </source>
</reference>
<reference key="2">
    <citation type="journal article" date="1999" name="Nature">
        <title>Sequence and analysis of chromosome 2 of the plant Arabidopsis thaliana.</title>
        <authorList>
            <person name="Lin X."/>
            <person name="Kaul S."/>
            <person name="Rounsley S.D."/>
            <person name="Shea T.P."/>
            <person name="Benito M.-I."/>
            <person name="Town C.D."/>
            <person name="Fujii C.Y."/>
            <person name="Mason T.M."/>
            <person name="Bowman C.L."/>
            <person name="Barnstead M.E."/>
            <person name="Feldblyum T.V."/>
            <person name="Buell C.R."/>
            <person name="Ketchum K.A."/>
            <person name="Lee J.J."/>
            <person name="Ronning C.M."/>
            <person name="Koo H.L."/>
            <person name="Moffat K.S."/>
            <person name="Cronin L.A."/>
            <person name="Shen M."/>
            <person name="Pai G."/>
            <person name="Van Aken S."/>
            <person name="Umayam L."/>
            <person name="Tallon L.J."/>
            <person name="Gill J.E."/>
            <person name="Adams M.D."/>
            <person name="Carrera A.J."/>
            <person name="Creasy T.H."/>
            <person name="Goodman H.M."/>
            <person name="Somerville C.R."/>
            <person name="Copenhaver G.P."/>
            <person name="Preuss D."/>
            <person name="Nierman W.C."/>
            <person name="White O."/>
            <person name="Eisen J.A."/>
            <person name="Salzberg S.L."/>
            <person name="Fraser C.M."/>
            <person name="Venter J.C."/>
        </authorList>
    </citation>
    <scope>NUCLEOTIDE SEQUENCE [LARGE SCALE GENOMIC DNA]</scope>
    <source>
        <strain>cv. Columbia</strain>
    </source>
</reference>
<reference key="3">
    <citation type="journal article" date="2017" name="Plant J.">
        <title>Araport11: a complete reannotation of the Arabidopsis thaliana reference genome.</title>
        <authorList>
            <person name="Cheng C.Y."/>
            <person name="Krishnakumar V."/>
            <person name="Chan A.P."/>
            <person name="Thibaud-Nissen F."/>
            <person name="Schobel S."/>
            <person name="Town C.D."/>
        </authorList>
    </citation>
    <scope>GENOME REANNOTATION</scope>
    <source>
        <strain>cv. Columbia</strain>
    </source>
</reference>
<reference key="4">
    <citation type="journal article" date="2003" name="Science">
        <title>Empirical analysis of transcriptional activity in the Arabidopsis genome.</title>
        <authorList>
            <person name="Yamada K."/>
            <person name="Lim J."/>
            <person name="Dale J.M."/>
            <person name="Chen H."/>
            <person name="Shinn P."/>
            <person name="Palm C.J."/>
            <person name="Southwick A.M."/>
            <person name="Wu H.C."/>
            <person name="Kim C.J."/>
            <person name="Nguyen M."/>
            <person name="Pham P.K."/>
            <person name="Cheuk R.F."/>
            <person name="Karlin-Newmann G."/>
            <person name="Liu S.X."/>
            <person name="Lam B."/>
            <person name="Sakano H."/>
            <person name="Wu T."/>
            <person name="Yu G."/>
            <person name="Miranda M."/>
            <person name="Quach H.L."/>
            <person name="Tripp M."/>
            <person name="Chang C.H."/>
            <person name="Lee J.M."/>
            <person name="Toriumi M.J."/>
            <person name="Chan M.M."/>
            <person name="Tang C.C."/>
            <person name="Onodera C.S."/>
            <person name="Deng J.M."/>
            <person name="Akiyama K."/>
            <person name="Ansari Y."/>
            <person name="Arakawa T."/>
            <person name="Banh J."/>
            <person name="Banno F."/>
            <person name="Bowser L."/>
            <person name="Brooks S.Y."/>
            <person name="Carninci P."/>
            <person name="Chao Q."/>
            <person name="Choy N."/>
            <person name="Enju A."/>
            <person name="Goldsmith A.D."/>
            <person name="Gurjal M."/>
            <person name="Hansen N.F."/>
            <person name="Hayashizaki Y."/>
            <person name="Johnson-Hopson C."/>
            <person name="Hsuan V.W."/>
            <person name="Iida K."/>
            <person name="Karnes M."/>
            <person name="Khan S."/>
            <person name="Koesema E."/>
            <person name="Ishida J."/>
            <person name="Jiang P.X."/>
            <person name="Jones T."/>
            <person name="Kawai J."/>
            <person name="Kamiya A."/>
            <person name="Meyers C."/>
            <person name="Nakajima M."/>
            <person name="Narusaka M."/>
            <person name="Seki M."/>
            <person name="Sakurai T."/>
            <person name="Satou M."/>
            <person name="Tamse R."/>
            <person name="Vaysberg M."/>
            <person name="Wallender E.K."/>
            <person name="Wong C."/>
            <person name="Yamamura Y."/>
            <person name="Yuan S."/>
            <person name="Shinozaki K."/>
            <person name="Davis R.W."/>
            <person name="Theologis A."/>
            <person name="Ecker J.R."/>
        </authorList>
    </citation>
    <scope>NUCLEOTIDE SEQUENCE [LARGE SCALE MRNA]</scope>
    <source>
        <strain>cv. Columbia</strain>
    </source>
</reference>
<reference key="5">
    <citation type="submission" date="2005-03" db="EMBL/GenBank/DDBJ databases">
        <title>Large-scale analysis of RIKEN Arabidopsis full-length (RAFL) cDNAs.</title>
        <authorList>
            <person name="Totoki Y."/>
            <person name="Seki M."/>
            <person name="Ishida J."/>
            <person name="Nakajima M."/>
            <person name="Enju A."/>
            <person name="Kamiya A."/>
            <person name="Narusaka M."/>
            <person name="Shin-i T."/>
            <person name="Nakagawa M."/>
            <person name="Sakamoto N."/>
            <person name="Oishi K."/>
            <person name="Kohara Y."/>
            <person name="Kobayashi M."/>
            <person name="Toyoda A."/>
            <person name="Sakaki Y."/>
            <person name="Sakurai T."/>
            <person name="Iida K."/>
            <person name="Akiyama K."/>
            <person name="Satou M."/>
            <person name="Toyoda T."/>
            <person name="Konagaya A."/>
            <person name="Carninci P."/>
            <person name="Kawai J."/>
            <person name="Hayashizaki Y."/>
            <person name="Shinozaki K."/>
        </authorList>
    </citation>
    <scope>NUCLEOTIDE SEQUENCE [LARGE SCALE MRNA] OF 273-359</scope>
    <source>
        <strain>cv. Columbia</strain>
    </source>
</reference>
<keyword id="KW-0223">Dioxygenase</keyword>
<keyword id="KW-0408">Iron</keyword>
<keyword id="KW-0479">Metal-binding</keyword>
<keyword id="KW-0560">Oxidoreductase</keyword>
<keyword id="KW-1185">Reference proteome</keyword>
<dbReference type="EC" id="1.14.-.-" evidence="3"/>
<dbReference type="EMBL" id="AC006300">
    <property type="protein sequence ID" value="AAD20704.1"/>
    <property type="molecule type" value="Genomic_DNA"/>
</dbReference>
<dbReference type="EMBL" id="CP002685">
    <property type="protein sequence ID" value="AEC07703.1"/>
    <property type="molecule type" value="Genomic_DNA"/>
</dbReference>
<dbReference type="EMBL" id="AY050787">
    <property type="protein sequence ID" value="AAK92722.1"/>
    <property type="molecule type" value="mRNA"/>
</dbReference>
<dbReference type="EMBL" id="AY114055">
    <property type="protein sequence ID" value="AAM45103.1"/>
    <property type="molecule type" value="mRNA"/>
</dbReference>
<dbReference type="EMBL" id="AK222132">
    <property type="protein sequence ID" value="BAD95147.1"/>
    <property type="status" value="ALT_INIT"/>
    <property type="molecule type" value="mRNA"/>
</dbReference>
<dbReference type="PIR" id="E84648">
    <property type="entry name" value="E84648"/>
</dbReference>
<dbReference type="RefSeq" id="NP_180115.1">
    <property type="nucleotide sequence ID" value="NM_128102.6"/>
</dbReference>
<dbReference type="SMR" id="Q9SKK4"/>
<dbReference type="BioGRID" id="2435">
    <property type="interactions" value="1"/>
</dbReference>
<dbReference type="FunCoup" id="Q9SKK4">
    <property type="interactions" value="4"/>
</dbReference>
<dbReference type="STRING" id="3702.Q9SKK4"/>
<dbReference type="iPTMnet" id="Q9SKK4"/>
<dbReference type="MetOSite" id="Q9SKK4"/>
<dbReference type="PaxDb" id="3702-AT2G25450.1"/>
<dbReference type="ProteomicsDB" id="248495"/>
<dbReference type="EnsemblPlants" id="AT2G25450.1">
    <property type="protein sequence ID" value="AT2G25450.1"/>
    <property type="gene ID" value="AT2G25450"/>
</dbReference>
<dbReference type="GeneID" id="817083"/>
<dbReference type="Gramene" id="AT2G25450.1">
    <property type="protein sequence ID" value="AT2G25450.1"/>
    <property type="gene ID" value="AT2G25450"/>
</dbReference>
<dbReference type="KEGG" id="ath:AT2G25450"/>
<dbReference type="Araport" id="AT2G25450"/>
<dbReference type="TAIR" id="AT2G25450">
    <property type="gene designation" value="GSL-OH"/>
</dbReference>
<dbReference type="eggNOG" id="KOG0143">
    <property type="taxonomic scope" value="Eukaryota"/>
</dbReference>
<dbReference type="HOGENOM" id="CLU_010119_0_0_1"/>
<dbReference type="InParanoid" id="Q9SKK4"/>
<dbReference type="OMA" id="IMREYSK"/>
<dbReference type="PhylomeDB" id="Q9SKK4"/>
<dbReference type="BioCyc" id="ARA:AT2G25450-MONOMER"/>
<dbReference type="BioCyc" id="MetaCyc:AT2G25450-MONOMER"/>
<dbReference type="PRO" id="PR:Q9SKK4"/>
<dbReference type="Proteomes" id="UP000006548">
    <property type="component" value="Chromosome 2"/>
</dbReference>
<dbReference type="ExpressionAtlas" id="Q9SKK4">
    <property type="expression patterns" value="baseline and differential"/>
</dbReference>
<dbReference type="GO" id="GO:0005829">
    <property type="term" value="C:cytosol"/>
    <property type="evidence" value="ECO:0007005"/>
    <property type="project" value="TAIR"/>
</dbReference>
<dbReference type="GO" id="GO:0009506">
    <property type="term" value="C:plasmodesma"/>
    <property type="evidence" value="ECO:0007005"/>
    <property type="project" value="TAIR"/>
</dbReference>
<dbReference type="GO" id="GO:0005773">
    <property type="term" value="C:vacuole"/>
    <property type="evidence" value="ECO:0007005"/>
    <property type="project" value="TAIR"/>
</dbReference>
<dbReference type="GO" id="GO:0009815">
    <property type="term" value="F:1-aminocyclopropane-1-carboxylate oxidase activity"/>
    <property type="evidence" value="ECO:0000250"/>
    <property type="project" value="TAIR"/>
</dbReference>
<dbReference type="GO" id="GO:0062131">
    <property type="term" value="F:3-butenylglucosinolate 2-hydroxylase activity"/>
    <property type="evidence" value="ECO:0000314"/>
    <property type="project" value="UniProtKB"/>
</dbReference>
<dbReference type="GO" id="GO:0046872">
    <property type="term" value="F:metal ion binding"/>
    <property type="evidence" value="ECO:0007669"/>
    <property type="project" value="UniProtKB-KW"/>
</dbReference>
<dbReference type="GO" id="GO:0019761">
    <property type="term" value="P:glucosinolate biosynthetic process"/>
    <property type="evidence" value="ECO:0000315"/>
    <property type="project" value="TAIR"/>
</dbReference>
<dbReference type="GO" id="GO:0010439">
    <property type="term" value="P:regulation of glucosinolate biosynthetic process"/>
    <property type="evidence" value="ECO:0000315"/>
    <property type="project" value="TAIR"/>
</dbReference>
<dbReference type="FunFam" id="2.60.120.330:FF:000005">
    <property type="entry name" value="1-aminocyclopropane-1-carboxylate oxidase homolog 1"/>
    <property type="match status" value="1"/>
</dbReference>
<dbReference type="Gene3D" id="2.60.120.330">
    <property type="entry name" value="B-lactam Antibiotic, Isopenicillin N Synthase, Chain"/>
    <property type="match status" value="1"/>
</dbReference>
<dbReference type="InterPro" id="IPR026992">
    <property type="entry name" value="DIOX_N"/>
</dbReference>
<dbReference type="InterPro" id="IPR044861">
    <property type="entry name" value="IPNS-like_FE2OG_OXY"/>
</dbReference>
<dbReference type="InterPro" id="IPR027443">
    <property type="entry name" value="IPNS-like_sf"/>
</dbReference>
<dbReference type="InterPro" id="IPR005123">
    <property type="entry name" value="Oxoglu/Fe-dep_dioxygenase_dom"/>
</dbReference>
<dbReference type="PANTHER" id="PTHR10209:SF513">
    <property type="entry name" value="2-OXOACID DEPENDENT DIOXYGENASE-RELATED"/>
    <property type="match status" value="1"/>
</dbReference>
<dbReference type="PANTHER" id="PTHR10209">
    <property type="entry name" value="OXIDOREDUCTASE, 2OG-FE II OXYGENASE FAMILY PROTEIN"/>
    <property type="match status" value="1"/>
</dbReference>
<dbReference type="Pfam" id="PF03171">
    <property type="entry name" value="2OG-FeII_Oxy"/>
    <property type="match status" value="1"/>
</dbReference>
<dbReference type="Pfam" id="PF14226">
    <property type="entry name" value="DIOX_N"/>
    <property type="match status" value="1"/>
</dbReference>
<dbReference type="SUPFAM" id="SSF51197">
    <property type="entry name" value="Clavaminate synthase-like"/>
    <property type="match status" value="1"/>
</dbReference>
<dbReference type="PROSITE" id="PS51471">
    <property type="entry name" value="FE2OG_OXY"/>
    <property type="match status" value="1"/>
</dbReference>